<protein>
    <recommendedName>
        <fullName>Cytochrome c oxidase subunit 2</fullName>
        <ecNumber>7.1.1.9</ecNumber>
    </recommendedName>
    <alternativeName>
        <fullName>Cytochrome c oxidase polypeptide II</fullName>
    </alternativeName>
</protein>
<accession>O47668</accession>
<name>COX2_CUOAL</name>
<proteinExistence type="inferred from homology"/>
<geneLocation type="mitochondrion"/>
<reference key="1">
    <citation type="journal article" date="1997" name="Syst. Biol.">
        <title>Molecular systematics of the Canidae.</title>
        <authorList>
            <person name="Wayne R.K."/>
            <person name="Geffen E."/>
            <person name="Girman D.J."/>
            <person name="Koepfli K.-P."/>
            <person name="Lau L.M."/>
            <person name="Marshall C.R."/>
        </authorList>
    </citation>
    <scope>NUCLEOTIDE SEQUENCE [GENOMIC DNA]</scope>
</reference>
<keyword id="KW-0186">Copper</keyword>
<keyword id="KW-0249">Electron transport</keyword>
<keyword id="KW-0460">Magnesium</keyword>
<keyword id="KW-0472">Membrane</keyword>
<keyword id="KW-0479">Metal-binding</keyword>
<keyword id="KW-0496">Mitochondrion</keyword>
<keyword id="KW-0999">Mitochondrion inner membrane</keyword>
<keyword id="KW-0597">Phosphoprotein</keyword>
<keyword id="KW-0679">Respiratory chain</keyword>
<keyword id="KW-1278">Translocase</keyword>
<keyword id="KW-0812">Transmembrane</keyword>
<keyword id="KW-1133">Transmembrane helix</keyword>
<keyword id="KW-0813">Transport</keyword>
<dbReference type="EC" id="7.1.1.9"/>
<dbReference type="EMBL" id="AF028209">
    <property type="protein sequence ID" value="AAC00102.1"/>
    <property type="molecule type" value="Genomic_DNA"/>
</dbReference>
<dbReference type="SMR" id="O47668"/>
<dbReference type="GO" id="GO:0005743">
    <property type="term" value="C:mitochondrial inner membrane"/>
    <property type="evidence" value="ECO:0007669"/>
    <property type="project" value="UniProtKB-SubCell"/>
</dbReference>
<dbReference type="GO" id="GO:0045277">
    <property type="term" value="C:respiratory chain complex IV"/>
    <property type="evidence" value="ECO:0000250"/>
    <property type="project" value="UniProtKB"/>
</dbReference>
<dbReference type="GO" id="GO:0005507">
    <property type="term" value="F:copper ion binding"/>
    <property type="evidence" value="ECO:0007669"/>
    <property type="project" value="InterPro"/>
</dbReference>
<dbReference type="GO" id="GO:0004129">
    <property type="term" value="F:cytochrome-c oxidase activity"/>
    <property type="evidence" value="ECO:0007669"/>
    <property type="project" value="UniProtKB-EC"/>
</dbReference>
<dbReference type="GO" id="GO:0042773">
    <property type="term" value="P:ATP synthesis coupled electron transport"/>
    <property type="evidence" value="ECO:0007669"/>
    <property type="project" value="TreeGrafter"/>
</dbReference>
<dbReference type="CDD" id="cd13912">
    <property type="entry name" value="CcO_II_C"/>
    <property type="match status" value="1"/>
</dbReference>
<dbReference type="FunFam" id="1.10.287.90:FF:000001">
    <property type="entry name" value="Cytochrome c oxidase subunit 2"/>
    <property type="match status" value="1"/>
</dbReference>
<dbReference type="FunFam" id="2.60.40.420:FF:000001">
    <property type="entry name" value="Cytochrome c oxidase subunit 2"/>
    <property type="match status" value="1"/>
</dbReference>
<dbReference type="Gene3D" id="1.10.287.90">
    <property type="match status" value="1"/>
</dbReference>
<dbReference type="Gene3D" id="2.60.40.420">
    <property type="entry name" value="Cupredoxins - blue copper proteins"/>
    <property type="match status" value="1"/>
</dbReference>
<dbReference type="InterPro" id="IPR045187">
    <property type="entry name" value="CcO_II"/>
</dbReference>
<dbReference type="InterPro" id="IPR002429">
    <property type="entry name" value="CcO_II-like_C"/>
</dbReference>
<dbReference type="InterPro" id="IPR034210">
    <property type="entry name" value="CcO_II_C"/>
</dbReference>
<dbReference type="InterPro" id="IPR001505">
    <property type="entry name" value="Copper_CuA"/>
</dbReference>
<dbReference type="InterPro" id="IPR008972">
    <property type="entry name" value="Cupredoxin"/>
</dbReference>
<dbReference type="InterPro" id="IPR014222">
    <property type="entry name" value="Cyt_c_oxidase_su2"/>
</dbReference>
<dbReference type="InterPro" id="IPR011759">
    <property type="entry name" value="Cyt_c_oxidase_su2_TM_dom"/>
</dbReference>
<dbReference type="InterPro" id="IPR036257">
    <property type="entry name" value="Cyt_c_oxidase_su2_TM_sf"/>
</dbReference>
<dbReference type="NCBIfam" id="TIGR02866">
    <property type="entry name" value="CoxB"/>
    <property type="match status" value="1"/>
</dbReference>
<dbReference type="PANTHER" id="PTHR22888:SF9">
    <property type="entry name" value="CYTOCHROME C OXIDASE SUBUNIT 2"/>
    <property type="match status" value="1"/>
</dbReference>
<dbReference type="PANTHER" id="PTHR22888">
    <property type="entry name" value="CYTOCHROME C OXIDASE, SUBUNIT II"/>
    <property type="match status" value="1"/>
</dbReference>
<dbReference type="Pfam" id="PF00116">
    <property type="entry name" value="COX2"/>
    <property type="match status" value="1"/>
</dbReference>
<dbReference type="Pfam" id="PF02790">
    <property type="entry name" value="COX2_TM"/>
    <property type="match status" value="1"/>
</dbReference>
<dbReference type="PRINTS" id="PR01166">
    <property type="entry name" value="CYCOXIDASEII"/>
</dbReference>
<dbReference type="SUPFAM" id="SSF49503">
    <property type="entry name" value="Cupredoxins"/>
    <property type="match status" value="1"/>
</dbReference>
<dbReference type="SUPFAM" id="SSF81464">
    <property type="entry name" value="Cytochrome c oxidase subunit II-like, transmembrane region"/>
    <property type="match status" value="1"/>
</dbReference>
<dbReference type="PROSITE" id="PS00078">
    <property type="entry name" value="COX2"/>
    <property type="match status" value="1"/>
</dbReference>
<dbReference type="PROSITE" id="PS50857">
    <property type="entry name" value="COX2_CUA"/>
    <property type="match status" value="1"/>
</dbReference>
<dbReference type="PROSITE" id="PS50999">
    <property type="entry name" value="COX2_TM"/>
    <property type="match status" value="1"/>
</dbReference>
<comment type="function">
    <text evidence="3">Component of the cytochrome c oxidase, the last enzyme in the mitochondrial electron transport chain which drives oxidative phosphorylation. The respiratory chain contains 3 multisubunit complexes succinate dehydrogenase (complex II, CII), ubiquinol-cytochrome c oxidoreductase (cytochrome b-c1 complex, complex III, CIII) and cytochrome c oxidase (complex IV, CIV), that cooperate to transfer electrons derived from NADH and succinate to molecular oxygen, creating an electrochemical gradient over the inner membrane that drives transmembrane transport and the ATP synthase. Cytochrome c oxidase is the component of the respiratory chain that catalyzes the reduction of oxygen to water. Electrons originating from reduced cytochrome c in the intermembrane space (IMS) are transferred via the dinuclear copper A center (CU(A)) of subunit 2 and heme A of subunit 1 to the active site in subunit 1, a binuclear center (BNC) formed by heme A3 and copper B (CU(B)). The BNC reduces molecular oxygen to 2 water molecules using 4 electrons from cytochrome c in the IMS and 4 protons from the mitochondrial matrix.</text>
</comment>
<comment type="catalytic activity">
    <reaction evidence="3">
        <text>4 Fe(II)-[cytochrome c] + O2 + 8 H(+)(in) = 4 Fe(III)-[cytochrome c] + 2 H2O + 4 H(+)(out)</text>
        <dbReference type="Rhea" id="RHEA:11436"/>
        <dbReference type="Rhea" id="RHEA-COMP:10350"/>
        <dbReference type="Rhea" id="RHEA-COMP:14399"/>
        <dbReference type="ChEBI" id="CHEBI:15377"/>
        <dbReference type="ChEBI" id="CHEBI:15378"/>
        <dbReference type="ChEBI" id="CHEBI:15379"/>
        <dbReference type="ChEBI" id="CHEBI:29033"/>
        <dbReference type="ChEBI" id="CHEBI:29034"/>
        <dbReference type="EC" id="7.1.1.9"/>
    </reaction>
    <physiologicalReaction direction="left-to-right" evidence="3">
        <dbReference type="Rhea" id="RHEA:11437"/>
    </physiologicalReaction>
</comment>
<comment type="cofactor">
    <cofactor evidence="4">
        <name>Cu cation</name>
        <dbReference type="ChEBI" id="CHEBI:23378"/>
    </cofactor>
    <text evidence="4">Binds a dinuclear copper A center per subunit.</text>
</comment>
<comment type="subunit">
    <text evidence="1 4">Component of the cytochrome c oxidase (complex IV, CIV), a multisubunit enzyme composed of 14 subunits. The complex is composed of a catalytic core of 3 subunits MT-CO1, MT-CO2 and MT-CO3, encoded in the mitochondrial DNA, and 11 supernumerary subunits COX4I, COX5A, COX5B, COX6A, COX6B, COX6C, COX7A, COX7B, COX7C, COX8 and NDUFA4, which are encoded in the nuclear genome. The complex exists as a monomer or a dimer and forms supercomplexes (SCs) in the inner mitochondrial membrane with NADH-ubiquinone oxidoreductase (complex I, CI) and ubiquinol-cytochrome c oxidoreductase (cytochrome b-c1 complex, complex III, CIII), resulting in different assemblies (supercomplex SCI(1)III(2)IV(1) and megacomplex MCI(2)III(2)IV(2)) (By similarity). Found in a complex with TMEM177, COA6, COX18, COX20, SCO1 and SCO2. Interacts with TMEM177 in a COX20-dependent manner. Interacts with COX20. Interacts with COX16 (By similarity).</text>
</comment>
<comment type="subcellular location">
    <subcellularLocation>
        <location evidence="4">Mitochondrion inner membrane</location>
        <topology evidence="4">Multi-pass membrane protein</topology>
    </subcellularLocation>
</comment>
<comment type="similarity">
    <text evidence="5">Belongs to the cytochrome c oxidase subunit 2 family.</text>
</comment>
<evidence type="ECO:0000250" key="1">
    <source>
        <dbReference type="UniProtKB" id="P00403"/>
    </source>
</evidence>
<evidence type="ECO:0000250" key="2">
    <source>
        <dbReference type="UniProtKB" id="P00406"/>
    </source>
</evidence>
<evidence type="ECO:0000250" key="3">
    <source>
        <dbReference type="UniProtKB" id="P00410"/>
    </source>
</evidence>
<evidence type="ECO:0000250" key="4">
    <source>
        <dbReference type="UniProtKB" id="P68530"/>
    </source>
</evidence>
<evidence type="ECO:0000305" key="5"/>
<organism>
    <name type="scientific">Cuon alpinus</name>
    <name type="common">Dhole</name>
    <dbReference type="NCBI Taxonomy" id="68730"/>
    <lineage>
        <taxon>Eukaryota</taxon>
        <taxon>Metazoa</taxon>
        <taxon>Chordata</taxon>
        <taxon>Craniata</taxon>
        <taxon>Vertebrata</taxon>
        <taxon>Euteleostomi</taxon>
        <taxon>Mammalia</taxon>
        <taxon>Eutheria</taxon>
        <taxon>Laurasiatheria</taxon>
        <taxon>Carnivora</taxon>
        <taxon>Caniformia</taxon>
        <taxon>Canidae</taxon>
        <taxon>Cuon</taxon>
    </lineage>
</organism>
<feature type="chain" id="PRO_0000183560" description="Cytochrome c oxidase subunit 2">
    <location>
        <begin position="1"/>
        <end position="227"/>
    </location>
</feature>
<feature type="topological domain" description="Mitochondrial intermembrane" evidence="4">
    <location>
        <begin position="1"/>
        <end position="14"/>
    </location>
</feature>
<feature type="transmembrane region" description="Helical; Name=I" evidence="4">
    <location>
        <begin position="15"/>
        <end position="45"/>
    </location>
</feature>
<feature type="topological domain" description="Mitochondrial matrix" evidence="4">
    <location>
        <begin position="46"/>
        <end position="59"/>
    </location>
</feature>
<feature type="transmembrane region" description="Helical; Name=II" evidence="4">
    <location>
        <begin position="60"/>
        <end position="87"/>
    </location>
</feature>
<feature type="topological domain" description="Mitochondrial intermembrane" evidence="4">
    <location>
        <begin position="88"/>
        <end position="227"/>
    </location>
</feature>
<feature type="binding site" evidence="4">
    <location>
        <position position="161"/>
    </location>
    <ligand>
        <name>Cu cation</name>
        <dbReference type="ChEBI" id="CHEBI:23378"/>
        <label>A1</label>
    </ligand>
</feature>
<feature type="binding site" evidence="4">
    <location>
        <position position="196"/>
    </location>
    <ligand>
        <name>Cu cation</name>
        <dbReference type="ChEBI" id="CHEBI:23378"/>
        <label>A1</label>
    </ligand>
</feature>
<feature type="binding site" evidence="4">
    <location>
        <position position="196"/>
    </location>
    <ligand>
        <name>Cu cation</name>
        <dbReference type="ChEBI" id="CHEBI:23378"/>
        <label>A2</label>
    </ligand>
</feature>
<feature type="binding site" evidence="4">
    <location>
        <position position="198"/>
    </location>
    <ligand>
        <name>Cu cation</name>
        <dbReference type="ChEBI" id="CHEBI:23378"/>
        <label>A2</label>
    </ligand>
</feature>
<feature type="binding site" evidence="4">
    <location>
        <position position="198"/>
    </location>
    <ligand>
        <name>Mg(2+)</name>
        <dbReference type="ChEBI" id="CHEBI:18420"/>
        <note>ligand shared with MT-CO1</note>
    </ligand>
</feature>
<feature type="binding site" evidence="4">
    <location>
        <position position="200"/>
    </location>
    <ligand>
        <name>Cu cation</name>
        <dbReference type="ChEBI" id="CHEBI:23378"/>
        <label>A1</label>
    </ligand>
</feature>
<feature type="binding site" evidence="4">
    <location>
        <position position="200"/>
    </location>
    <ligand>
        <name>Cu cation</name>
        <dbReference type="ChEBI" id="CHEBI:23378"/>
        <label>A2</label>
    </ligand>
</feature>
<feature type="binding site" evidence="4">
    <location>
        <position position="204"/>
    </location>
    <ligand>
        <name>Cu cation</name>
        <dbReference type="ChEBI" id="CHEBI:23378"/>
        <label>A2</label>
    </ligand>
</feature>
<feature type="binding site" evidence="4">
    <location>
        <position position="207"/>
    </location>
    <ligand>
        <name>Cu cation</name>
        <dbReference type="ChEBI" id="CHEBI:23378"/>
        <label>A1</label>
    </ligand>
</feature>
<feature type="modified residue" description="Phosphotyrosine" evidence="2">
    <location>
        <position position="218"/>
    </location>
</feature>
<sequence>MAYPFQLGLQDATSPIMEELLHFHDHTLMIVFLISSLVLYIISLMLTTKLTHTSTMDAQEVETVWTILPAIILILIALPSLRILYMMDEINNPSLTVKTMGHQWYWSYEYTDYEDLNFDSYMIPTQELKPGELRLLEVDNRVVLPMEMTIRMLISSEDVLHSWAVPSLGLKTDAIPGRLNQTTLMAMRPGLYYGQCSEICGSNHSFMPIVLEMVPLSYFEAWSALMV</sequence>
<gene>
    <name type="primary">MT-CO2</name>
    <name type="synonym">COII</name>
    <name type="synonym">COXII</name>
    <name type="synonym">MTCO2</name>
</gene>